<keyword id="KW-0066">ATP synthesis</keyword>
<keyword id="KW-0138">CF(0)</keyword>
<keyword id="KW-0375">Hydrogen ion transport</keyword>
<keyword id="KW-0406">Ion transport</keyword>
<keyword id="KW-0472">Membrane</keyword>
<keyword id="KW-0793">Thylakoid</keyword>
<keyword id="KW-0812">Transmembrane</keyword>
<keyword id="KW-1133">Transmembrane helix</keyword>
<keyword id="KW-0813">Transport</keyword>
<protein>
    <recommendedName>
        <fullName evidence="1">ATP synthase subunit b'</fullName>
    </recommendedName>
    <alternativeName>
        <fullName evidence="1">ATP synthase F(0) sector subunit b'</fullName>
    </alternativeName>
    <alternativeName>
        <fullName evidence="1">ATPase subunit II</fullName>
    </alternativeName>
    <alternativeName>
        <fullName evidence="1">F-type ATPase subunit b'</fullName>
        <shortName evidence="1">F-ATPase subunit b'</shortName>
    </alternativeName>
</protein>
<sequence length="153" mass="17058">MLAFNFFGATEGGLFDINATLPLMAIQVVALTYILNSLFFKPVGNVVEKREKFVSNNIIEAKNKLSEVKKLEAELLTQLQSARTEAQRIVGEAENESDKLYKEALELANNEANASKEKARLEIESQTSAARDQLSKQADDLSELIVNRLILEK</sequence>
<reference key="1">
    <citation type="journal article" date="2006" name="Science">
        <title>Genomic islands and the ecology and evolution of Prochlorococcus.</title>
        <authorList>
            <person name="Coleman M.L."/>
            <person name="Sullivan M.B."/>
            <person name="Martiny A.C."/>
            <person name="Steglich C."/>
            <person name="Barry K."/>
            <person name="Delong E.F."/>
            <person name="Chisholm S.W."/>
        </authorList>
    </citation>
    <scope>NUCLEOTIDE SEQUENCE [LARGE SCALE GENOMIC DNA]</scope>
    <source>
        <strain>MIT 9312</strain>
    </source>
</reference>
<feature type="chain" id="PRO_0000369026" description="ATP synthase subunit b'">
    <location>
        <begin position="1"/>
        <end position="153"/>
    </location>
</feature>
<feature type="transmembrane region" description="Helical" evidence="1">
    <location>
        <begin position="23"/>
        <end position="40"/>
    </location>
</feature>
<dbReference type="EMBL" id="CP000111">
    <property type="protein sequence ID" value="ABB50607.1"/>
    <property type="molecule type" value="Genomic_DNA"/>
</dbReference>
<dbReference type="RefSeq" id="WP_011377090.1">
    <property type="nucleotide sequence ID" value="NC_007577.1"/>
</dbReference>
<dbReference type="SMR" id="Q318T8"/>
<dbReference type="STRING" id="74546.PMT9312_1547"/>
<dbReference type="KEGG" id="pmi:PMT9312_1547"/>
<dbReference type="eggNOG" id="COG0711">
    <property type="taxonomic scope" value="Bacteria"/>
</dbReference>
<dbReference type="HOGENOM" id="CLU_079215_9_0_3"/>
<dbReference type="OrthoDB" id="426571at2"/>
<dbReference type="Proteomes" id="UP000002715">
    <property type="component" value="Chromosome"/>
</dbReference>
<dbReference type="GO" id="GO:0031676">
    <property type="term" value="C:plasma membrane-derived thylakoid membrane"/>
    <property type="evidence" value="ECO:0007669"/>
    <property type="project" value="UniProtKB-SubCell"/>
</dbReference>
<dbReference type="GO" id="GO:0045259">
    <property type="term" value="C:proton-transporting ATP synthase complex"/>
    <property type="evidence" value="ECO:0007669"/>
    <property type="project" value="UniProtKB-KW"/>
</dbReference>
<dbReference type="GO" id="GO:0046933">
    <property type="term" value="F:proton-transporting ATP synthase activity, rotational mechanism"/>
    <property type="evidence" value="ECO:0007669"/>
    <property type="project" value="UniProtKB-UniRule"/>
</dbReference>
<dbReference type="GO" id="GO:0046961">
    <property type="term" value="F:proton-transporting ATPase activity, rotational mechanism"/>
    <property type="evidence" value="ECO:0007669"/>
    <property type="project" value="TreeGrafter"/>
</dbReference>
<dbReference type="CDD" id="cd06503">
    <property type="entry name" value="ATP-synt_Fo_b"/>
    <property type="match status" value="1"/>
</dbReference>
<dbReference type="Gene3D" id="1.20.5.620">
    <property type="entry name" value="F1F0 ATP synthase subunit B, membrane domain"/>
    <property type="match status" value="1"/>
</dbReference>
<dbReference type="HAMAP" id="MF_01398">
    <property type="entry name" value="ATP_synth_b_bprime"/>
    <property type="match status" value="1"/>
</dbReference>
<dbReference type="HAMAP" id="MF_01399">
    <property type="entry name" value="ATP_synth_bprime"/>
    <property type="match status" value="1"/>
</dbReference>
<dbReference type="InterPro" id="IPR034679">
    <property type="entry name" value="ATP_synth_b"/>
</dbReference>
<dbReference type="InterPro" id="IPR028987">
    <property type="entry name" value="ATP_synth_B-like_membr_sf"/>
</dbReference>
<dbReference type="InterPro" id="IPR002146">
    <property type="entry name" value="ATP_synth_b/b'su_bac/chlpt"/>
</dbReference>
<dbReference type="InterPro" id="IPR050059">
    <property type="entry name" value="ATP_synthase_B_chain"/>
</dbReference>
<dbReference type="NCBIfam" id="NF005607">
    <property type="entry name" value="PRK07353.1"/>
    <property type="match status" value="1"/>
</dbReference>
<dbReference type="PANTHER" id="PTHR33445">
    <property type="entry name" value="ATP SYNTHASE SUBUNIT B', CHLOROPLASTIC"/>
    <property type="match status" value="1"/>
</dbReference>
<dbReference type="PANTHER" id="PTHR33445:SF2">
    <property type="entry name" value="ATP SYNTHASE SUBUNIT B', CHLOROPLASTIC"/>
    <property type="match status" value="1"/>
</dbReference>
<dbReference type="Pfam" id="PF00430">
    <property type="entry name" value="ATP-synt_B"/>
    <property type="match status" value="1"/>
</dbReference>
<dbReference type="SUPFAM" id="SSF81573">
    <property type="entry name" value="F1F0 ATP synthase subunit B, membrane domain"/>
    <property type="match status" value="1"/>
</dbReference>
<organism>
    <name type="scientific">Prochlorococcus marinus (strain MIT 9312)</name>
    <dbReference type="NCBI Taxonomy" id="74546"/>
    <lineage>
        <taxon>Bacteria</taxon>
        <taxon>Bacillati</taxon>
        <taxon>Cyanobacteriota</taxon>
        <taxon>Cyanophyceae</taxon>
        <taxon>Synechococcales</taxon>
        <taxon>Prochlorococcaceae</taxon>
        <taxon>Prochlorococcus</taxon>
    </lineage>
</organism>
<accession>Q318T8</accession>
<proteinExistence type="inferred from homology"/>
<name>ATPF2_PROM9</name>
<evidence type="ECO:0000255" key="1">
    <source>
        <dbReference type="HAMAP-Rule" id="MF_01399"/>
    </source>
</evidence>
<gene>
    <name evidence="1" type="primary">atpF2</name>
    <name evidence="1" type="synonym">atpG</name>
    <name type="ordered locus">PMT9312_1547</name>
</gene>
<comment type="function">
    <text evidence="1">F(1)F(0) ATP synthase produces ATP from ADP in the presence of a proton or sodium gradient. F-type ATPases consist of two structural domains, F(1) containing the extramembraneous catalytic core and F(0) containing the membrane proton channel, linked together by a central stalk and a peripheral stalk. During catalysis, ATP synthesis in the catalytic domain of F(1) is coupled via a rotary mechanism of the central stalk subunits to proton translocation.</text>
</comment>
<comment type="function">
    <text evidence="1">Component of the F(0) channel, it forms part of the peripheral stalk, linking F(1) to F(0). The b'-subunit is a diverged and duplicated form of b found in plants and photosynthetic bacteria.</text>
</comment>
<comment type="subunit">
    <text evidence="1">F-type ATPases have 2 components, F(1) - the catalytic core - and F(0) - the membrane proton channel. F(1) has five subunits: alpha(3), beta(3), gamma(1), delta(1), epsilon(1). F(0) has four main subunits: a(1), b(1), b'(1) and c(10-14). The alpha and beta chains form an alternating ring which encloses part of the gamma chain. F(1) is attached to F(0) by a central stalk formed by the gamma and epsilon chains, while a peripheral stalk is formed by the delta, b and b' chains.</text>
</comment>
<comment type="subcellular location">
    <subcellularLocation>
        <location evidence="1">Cellular thylakoid membrane</location>
        <topology evidence="1">Single-pass membrane protein</topology>
    </subcellularLocation>
</comment>
<comment type="similarity">
    <text evidence="1">Belongs to the ATPase B chain family.</text>
</comment>